<accession>O35047</accession>
<accession>Q3V035</accession>
<comment type="function">
    <text evidence="5 6 7 8 9 10">Plays an important role in meiotic recombination. Stimulates DMC1-mediated strand exchange required for pairing homologous chromosomes during meiosis. The complex PSMC3IP/MND1 binds DNA, stimulates the recombinase activity of DMC1 as well as DMC1 D-loop formation from double-strand DNA. This complex stabilizes presynaptic RAD51 and DMC1 filaments formed on single strand DNA to capture double-strand DNA. This complex stimulates both synaptic and presynaptic critical steps in RAD51 and DMC1-promoted homologous pairing. May inhibit HIV-1 viral protein TAT activity and modulate the activity of proteasomes through association with PSMC3.</text>
</comment>
<comment type="subunit">
    <text evidence="1 6 10">Interacts with the DNA-binding domain of the nuclear receptors NR3C1/GR, ESR2/ER-beta, THRB and RXRA (By similarity). Forms a stable heterodimer with MND1. Interacts with PSMC3/TBP1.</text>
</comment>
<comment type="subcellular location">
    <subcellularLocation>
        <location evidence="3">Nucleus</location>
    </subcellularLocation>
</comment>
<comment type="tissue specificity">
    <text evidence="3 10">Highly expressed in testis and more specifically in spermatocytes. Detected in spleen, ovary and thymus.</text>
</comment>
<comment type="developmental stage">
    <text evidence="3">Overexpressed at day 11 in the embryo.</text>
</comment>
<comment type="PTM">
    <text evidence="1">Phosphorylated by PKA, PKC and MAPK.</text>
</comment>
<comment type="disruption phenotype">
    <text evidence="4">Infertility. Males exhibit testicular hypoplasia with lack of spermatozoa. Spermatocytes arrest at the stage of pachytene-like chromosome condensation and spermatogenesis is blocked at prophase of meiosis I. Axial elements are fully developed, but synapsis is limited. While meiotic double-stranded breaks are formed and processed, they fail to be repaired.</text>
</comment>
<comment type="similarity">
    <text evidence="11">Belongs to the HOP2 family.</text>
</comment>
<proteinExistence type="evidence at protein level"/>
<name>HOP2_MOUSE</name>
<dbReference type="EMBL" id="AB000121">
    <property type="protein sequence ID" value="BAA23155.1"/>
    <property type="molecule type" value="mRNA"/>
</dbReference>
<dbReference type="EMBL" id="AK133462">
    <property type="protein sequence ID" value="BAE21670.1"/>
    <property type="molecule type" value="mRNA"/>
</dbReference>
<dbReference type="EMBL" id="BX255926">
    <property type="status" value="NOT_ANNOTATED_CDS"/>
    <property type="molecule type" value="Genomic_DNA"/>
</dbReference>
<dbReference type="EMBL" id="BC030169">
    <property type="protein sequence ID" value="AAH30169.1"/>
    <property type="molecule type" value="mRNA"/>
</dbReference>
<dbReference type="CCDS" id="CCDS25448.1"/>
<dbReference type="PIR" id="JC5710">
    <property type="entry name" value="JC5710"/>
</dbReference>
<dbReference type="RefSeq" id="NP_032975.1">
    <property type="nucleotide sequence ID" value="NM_008949.3"/>
</dbReference>
<dbReference type="PDB" id="2MH2">
    <property type="method" value="NMR"/>
    <property type="chains" value="A=1-84"/>
</dbReference>
<dbReference type="PDBsum" id="2MH2"/>
<dbReference type="BMRB" id="O35047"/>
<dbReference type="SMR" id="O35047"/>
<dbReference type="BioGRID" id="202429">
    <property type="interactions" value="1"/>
</dbReference>
<dbReference type="CORUM" id="O35047"/>
<dbReference type="FunCoup" id="O35047">
    <property type="interactions" value="1984"/>
</dbReference>
<dbReference type="STRING" id="10090.ENSMUSP00000019447"/>
<dbReference type="PhosphoSitePlus" id="O35047"/>
<dbReference type="PaxDb" id="10090-ENSMUSP00000019447"/>
<dbReference type="ProteomicsDB" id="273379"/>
<dbReference type="Pumba" id="O35047"/>
<dbReference type="Antibodypedia" id="29297">
    <property type="antibodies" value="68 antibodies from 21 providers"/>
</dbReference>
<dbReference type="DNASU" id="19183"/>
<dbReference type="Ensembl" id="ENSMUST00000019447.15">
    <property type="protein sequence ID" value="ENSMUSP00000019447.9"/>
    <property type="gene ID" value="ENSMUSG00000019303.15"/>
</dbReference>
<dbReference type="GeneID" id="19183"/>
<dbReference type="KEGG" id="mmu:19183"/>
<dbReference type="UCSC" id="uc007lnh.2">
    <property type="organism name" value="mouse"/>
</dbReference>
<dbReference type="AGR" id="MGI:1098610"/>
<dbReference type="CTD" id="29893"/>
<dbReference type="MGI" id="MGI:1098610">
    <property type="gene designation" value="Psmc3ip"/>
</dbReference>
<dbReference type="VEuPathDB" id="HostDB:ENSMUSG00000019303"/>
<dbReference type="eggNOG" id="KOG4603">
    <property type="taxonomic scope" value="Eukaryota"/>
</dbReference>
<dbReference type="GeneTree" id="ENSGT00390000006890"/>
<dbReference type="HOGENOM" id="CLU_063266_1_0_1"/>
<dbReference type="InParanoid" id="O35047"/>
<dbReference type="OMA" id="QKYHREW"/>
<dbReference type="OrthoDB" id="272266at2759"/>
<dbReference type="PhylomeDB" id="O35047"/>
<dbReference type="TreeFam" id="TF328666"/>
<dbReference type="BioGRID-ORCS" id="19183">
    <property type="hits" value="4 hits in 80 CRISPR screens"/>
</dbReference>
<dbReference type="ChiTaRS" id="Psmc3ip">
    <property type="organism name" value="mouse"/>
</dbReference>
<dbReference type="EvolutionaryTrace" id="O35047"/>
<dbReference type="PRO" id="PR:O35047"/>
<dbReference type="Proteomes" id="UP000000589">
    <property type="component" value="Chromosome 11"/>
</dbReference>
<dbReference type="RNAct" id="O35047">
    <property type="molecule type" value="protein"/>
</dbReference>
<dbReference type="Bgee" id="ENSMUSG00000019303">
    <property type="expression patterns" value="Expressed in optic fissure and 206 other cell types or tissues"/>
</dbReference>
<dbReference type="ExpressionAtlas" id="O35047">
    <property type="expression patterns" value="baseline and differential"/>
</dbReference>
<dbReference type="GO" id="GO:0005654">
    <property type="term" value="C:nucleoplasm"/>
    <property type="evidence" value="ECO:0007669"/>
    <property type="project" value="Ensembl"/>
</dbReference>
<dbReference type="GO" id="GO:0003677">
    <property type="term" value="F:DNA binding"/>
    <property type="evidence" value="ECO:0007669"/>
    <property type="project" value="UniProtKB-KW"/>
</dbReference>
<dbReference type="GO" id="GO:0003713">
    <property type="term" value="F:transcription coactivator activity"/>
    <property type="evidence" value="ECO:0007669"/>
    <property type="project" value="Ensembl"/>
</dbReference>
<dbReference type="GO" id="GO:0007129">
    <property type="term" value="P:homologous chromosome pairing at meiosis"/>
    <property type="evidence" value="ECO:0007669"/>
    <property type="project" value="Ensembl"/>
</dbReference>
<dbReference type="GO" id="GO:0007131">
    <property type="term" value="P:reciprocal meiotic recombination"/>
    <property type="evidence" value="ECO:0007669"/>
    <property type="project" value="Ensembl"/>
</dbReference>
<dbReference type="FunFam" id="1.10.10.10:FF:000394">
    <property type="entry name" value="Homologous-pairing protein 2 homolog"/>
    <property type="match status" value="1"/>
</dbReference>
<dbReference type="Gene3D" id="1.10.10.10">
    <property type="entry name" value="Winged helix-like DNA-binding domain superfamily/Winged helix DNA-binding domain"/>
    <property type="match status" value="1"/>
</dbReference>
<dbReference type="InterPro" id="IPR010776">
    <property type="entry name" value="Hop2_WH_dom"/>
</dbReference>
<dbReference type="InterPro" id="IPR040661">
    <property type="entry name" value="LZ3wCH"/>
</dbReference>
<dbReference type="InterPro" id="IPR036388">
    <property type="entry name" value="WH-like_DNA-bd_sf"/>
</dbReference>
<dbReference type="InterPro" id="IPR036390">
    <property type="entry name" value="WH_DNA-bd_sf"/>
</dbReference>
<dbReference type="PANTHER" id="PTHR15938:SF0">
    <property type="entry name" value="HOMOLOGOUS-PAIRING PROTEIN 2 HOMOLOG"/>
    <property type="match status" value="1"/>
</dbReference>
<dbReference type="PANTHER" id="PTHR15938">
    <property type="entry name" value="TBP-1 INTERACTING PROTEIN"/>
    <property type="match status" value="1"/>
</dbReference>
<dbReference type="Pfam" id="PF18517">
    <property type="entry name" value="LZ3wCH"/>
    <property type="match status" value="1"/>
</dbReference>
<dbReference type="Pfam" id="PF07106">
    <property type="entry name" value="TBPIP"/>
    <property type="match status" value="1"/>
</dbReference>
<dbReference type="SUPFAM" id="SSF46785">
    <property type="entry name" value="Winged helix' DNA-binding domain"/>
    <property type="match status" value="1"/>
</dbReference>
<evidence type="ECO:0000250" key="1"/>
<evidence type="ECO:0000255" key="2"/>
<evidence type="ECO:0000269" key="3">
    <source>
    </source>
</evidence>
<evidence type="ECO:0000269" key="4">
    <source>
    </source>
</evidence>
<evidence type="ECO:0000269" key="5">
    <source>
    </source>
</evidence>
<evidence type="ECO:0000269" key="6">
    <source>
    </source>
</evidence>
<evidence type="ECO:0000269" key="7">
    <source>
    </source>
</evidence>
<evidence type="ECO:0000269" key="8">
    <source>
    </source>
</evidence>
<evidence type="ECO:0000269" key="9">
    <source>
    </source>
</evidence>
<evidence type="ECO:0000269" key="10">
    <source>
    </source>
</evidence>
<evidence type="ECO:0000305" key="11"/>
<evidence type="ECO:0007829" key="12">
    <source>
        <dbReference type="PDB" id="2MH2"/>
    </source>
</evidence>
<feature type="chain" id="PRO_0000314136" description="Homologous-pairing protein 2 homolog">
    <location>
        <begin position="1"/>
        <end position="217"/>
    </location>
</feature>
<feature type="region of interest" description="DNA-binding">
    <location>
        <begin position="118"/>
        <end position="182"/>
    </location>
</feature>
<feature type="coiled-coil region" evidence="2">
    <location>
        <begin position="84"/>
        <end position="152"/>
    </location>
</feature>
<feature type="mutagenesis site" description="Alters PSMC3/MND1 formation." evidence="6">
    <original>E</original>
    <variation>P</variation>
    <location>
        <position position="136"/>
    </location>
</feature>
<feature type="sequence conflict" description="In Ref. 2; BAE21670." evidence="11" ref="2">
    <original>T</original>
    <variation>K</variation>
    <location>
        <position position="80"/>
    </location>
</feature>
<feature type="helix" evidence="12">
    <location>
        <begin position="12"/>
        <end position="23"/>
    </location>
</feature>
<feature type="helix" evidence="12">
    <location>
        <begin position="29"/>
        <end position="37"/>
    </location>
</feature>
<feature type="turn" evidence="12">
    <location>
        <begin position="38"/>
        <end position="40"/>
    </location>
</feature>
<feature type="helix" evidence="12">
    <location>
        <begin position="44"/>
        <end position="57"/>
    </location>
</feature>
<feature type="strand" evidence="12">
    <location>
        <begin position="59"/>
        <end position="65"/>
    </location>
</feature>
<feature type="strand" evidence="12">
    <location>
        <begin position="68"/>
        <end position="73"/>
    </location>
</feature>
<reference key="1">
    <citation type="journal article" date="1997" name="Biochem. Biophys. Res. Commun.">
        <title>Molecular cloning and characterization of a novel TBP-1 interacting protein (TBPIP): enhancement of TBP-1 action on Tat by TBPIP.</title>
        <authorList>
            <person name="Tanaka T."/>
            <person name="Nakamura T."/>
            <person name="Takagi H."/>
            <person name="Sato M."/>
        </authorList>
    </citation>
    <scope>NUCLEOTIDE SEQUENCE [MRNA]</scope>
    <scope>INTERACTION WITH PSMC3</scope>
    <scope>TISSUE SPECIFICITY</scope>
    <scope>FUNCTION</scope>
    <source>
        <strain>BALB/cJ</strain>
        <tissue>Testis</tissue>
    </source>
</reference>
<reference key="2">
    <citation type="journal article" date="2005" name="Science">
        <title>The transcriptional landscape of the mammalian genome.</title>
        <authorList>
            <person name="Carninci P."/>
            <person name="Kasukawa T."/>
            <person name="Katayama S."/>
            <person name="Gough J."/>
            <person name="Frith M.C."/>
            <person name="Maeda N."/>
            <person name="Oyama R."/>
            <person name="Ravasi T."/>
            <person name="Lenhard B."/>
            <person name="Wells C."/>
            <person name="Kodzius R."/>
            <person name="Shimokawa K."/>
            <person name="Bajic V.B."/>
            <person name="Brenner S.E."/>
            <person name="Batalov S."/>
            <person name="Forrest A.R."/>
            <person name="Zavolan M."/>
            <person name="Davis M.J."/>
            <person name="Wilming L.G."/>
            <person name="Aidinis V."/>
            <person name="Allen J.E."/>
            <person name="Ambesi-Impiombato A."/>
            <person name="Apweiler R."/>
            <person name="Aturaliya R.N."/>
            <person name="Bailey T.L."/>
            <person name="Bansal M."/>
            <person name="Baxter L."/>
            <person name="Beisel K.W."/>
            <person name="Bersano T."/>
            <person name="Bono H."/>
            <person name="Chalk A.M."/>
            <person name="Chiu K.P."/>
            <person name="Choudhary V."/>
            <person name="Christoffels A."/>
            <person name="Clutterbuck D.R."/>
            <person name="Crowe M.L."/>
            <person name="Dalla E."/>
            <person name="Dalrymple B.P."/>
            <person name="de Bono B."/>
            <person name="Della Gatta G."/>
            <person name="di Bernardo D."/>
            <person name="Down T."/>
            <person name="Engstrom P."/>
            <person name="Fagiolini M."/>
            <person name="Faulkner G."/>
            <person name="Fletcher C.F."/>
            <person name="Fukushima T."/>
            <person name="Furuno M."/>
            <person name="Futaki S."/>
            <person name="Gariboldi M."/>
            <person name="Georgii-Hemming P."/>
            <person name="Gingeras T.R."/>
            <person name="Gojobori T."/>
            <person name="Green R.E."/>
            <person name="Gustincich S."/>
            <person name="Harbers M."/>
            <person name="Hayashi Y."/>
            <person name="Hensch T.K."/>
            <person name="Hirokawa N."/>
            <person name="Hill D."/>
            <person name="Huminiecki L."/>
            <person name="Iacono M."/>
            <person name="Ikeo K."/>
            <person name="Iwama A."/>
            <person name="Ishikawa T."/>
            <person name="Jakt M."/>
            <person name="Kanapin A."/>
            <person name="Katoh M."/>
            <person name="Kawasawa Y."/>
            <person name="Kelso J."/>
            <person name="Kitamura H."/>
            <person name="Kitano H."/>
            <person name="Kollias G."/>
            <person name="Krishnan S.P."/>
            <person name="Kruger A."/>
            <person name="Kummerfeld S.K."/>
            <person name="Kurochkin I.V."/>
            <person name="Lareau L.F."/>
            <person name="Lazarevic D."/>
            <person name="Lipovich L."/>
            <person name="Liu J."/>
            <person name="Liuni S."/>
            <person name="McWilliam S."/>
            <person name="Madan Babu M."/>
            <person name="Madera M."/>
            <person name="Marchionni L."/>
            <person name="Matsuda H."/>
            <person name="Matsuzawa S."/>
            <person name="Miki H."/>
            <person name="Mignone F."/>
            <person name="Miyake S."/>
            <person name="Morris K."/>
            <person name="Mottagui-Tabar S."/>
            <person name="Mulder N."/>
            <person name="Nakano N."/>
            <person name="Nakauchi H."/>
            <person name="Ng P."/>
            <person name="Nilsson R."/>
            <person name="Nishiguchi S."/>
            <person name="Nishikawa S."/>
            <person name="Nori F."/>
            <person name="Ohara O."/>
            <person name="Okazaki Y."/>
            <person name="Orlando V."/>
            <person name="Pang K.C."/>
            <person name="Pavan W.J."/>
            <person name="Pavesi G."/>
            <person name="Pesole G."/>
            <person name="Petrovsky N."/>
            <person name="Piazza S."/>
            <person name="Reed J."/>
            <person name="Reid J.F."/>
            <person name="Ring B.Z."/>
            <person name="Ringwald M."/>
            <person name="Rost B."/>
            <person name="Ruan Y."/>
            <person name="Salzberg S.L."/>
            <person name="Sandelin A."/>
            <person name="Schneider C."/>
            <person name="Schoenbach C."/>
            <person name="Sekiguchi K."/>
            <person name="Semple C.A."/>
            <person name="Seno S."/>
            <person name="Sessa L."/>
            <person name="Sheng Y."/>
            <person name="Shibata Y."/>
            <person name="Shimada H."/>
            <person name="Shimada K."/>
            <person name="Silva D."/>
            <person name="Sinclair B."/>
            <person name="Sperling S."/>
            <person name="Stupka E."/>
            <person name="Sugiura K."/>
            <person name="Sultana R."/>
            <person name="Takenaka Y."/>
            <person name="Taki K."/>
            <person name="Tammoja K."/>
            <person name="Tan S.L."/>
            <person name="Tang S."/>
            <person name="Taylor M.S."/>
            <person name="Tegner J."/>
            <person name="Teichmann S.A."/>
            <person name="Ueda H.R."/>
            <person name="van Nimwegen E."/>
            <person name="Verardo R."/>
            <person name="Wei C.L."/>
            <person name="Yagi K."/>
            <person name="Yamanishi H."/>
            <person name="Zabarovsky E."/>
            <person name="Zhu S."/>
            <person name="Zimmer A."/>
            <person name="Hide W."/>
            <person name="Bult C."/>
            <person name="Grimmond S.M."/>
            <person name="Teasdale R.D."/>
            <person name="Liu E.T."/>
            <person name="Brusic V."/>
            <person name="Quackenbush J."/>
            <person name="Wahlestedt C."/>
            <person name="Mattick J.S."/>
            <person name="Hume D.A."/>
            <person name="Kai C."/>
            <person name="Sasaki D."/>
            <person name="Tomaru Y."/>
            <person name="Fukuda S."/>
            <person name="Kanamori-Katayama M."/>
            <person name="Suzuki M."/>
            <person name="Aoki J."/>
            <person name="Arakawa T."/>
            <person name="Iida J."/>
            <person name="Imamura K."/>
            <person name="Itoh M."/>
            <person name="Kato T."/>
            <person name="Kawaji H."/>
            <person name="Kawagashira N."/>
            <person name="Kawashima T."/>
            <person name="Kojima M."/>
            <person name="Kondo S."/>
            <person name="Konno H."/>
            <person name="Nakano K."/>
            <person name="Ninomiya N."/>
            <person name="Nishio T."/>
            <person name="Okada M."/>
            <person name="Plessy C."/>
            <person name="Shibata K."/>
            <person name="Shiraki T."/>
            <person name="Suzuki S."/>
            <person name="Tagami M."/>
            <person name="Waki K."/>
            <person name="Watahiki A."/>
            <person name="Okamura-Oho Y."/>
            <person name="Suzuki H."/>
            <person name="Kawai J."/>
            <person name="Hayashizaki Y."/>
        </authorList>
    </citation>
    <scope>NUCLEOTIDE SEQUENCE [LARGE SCALE MRNA]</scope>
    <source>
        <strain>C57BL/6J</strain>
        <tissue>Testis</tissue>
    </source>
</reference>
<reference key="3">
    <citation type="journal article" date="2009" name="PLoS Biol.">
        <title>Lineage-specific biology revealed by a finished genome assembly of the mouse.</title>
        <authorList>
            <person name="Church D.M."/>
            <person name="Goodstadt L."/>
            <person name="Hillier L.W."/>
            <person name="Zody M.C."/>
            <person name="Goldstein S."/>
            <person name="She X."/>
            <person name="Bult C.J."/>
            <person name="Agarwala R."/>
            <person name="Cherry J.L."/>
            <person name="DiCuccio M."/>
            <person name="Hlavina W."/>
            <person name="Kapustin Y."/>
            <person name="Meric P."/>
            <person name="Maglott D."/>
            <person name="Birtle Z."/>
            <person name="Marques A.C."/>
            <person name="Graves T."/>
            <person name="Zhou S."/>
            <person name="Teague B."/>
            <person name="Potamousis K."/>
            <person name="Churas C."/>
            <person name="Place M."/>
            <person name="Herschleb J."/>
            <person name="Runnheim R."/>
            <person name="Forrest D."/>
            <person name="Amos-Landgraf J."/>
            <person name="Schwartz D.C."/>
            <person name="Cheng Z."/>
            <person name="Lindblad-Toh K."/>
            <person name="Eichler E.E."/>
            <person name="Ponting C.P."/>
        </authorList>
    </citation>
    <scope>NUCLEOTIDE SEQUENCE [LARGE SCALE GENOMIC DNA]</scope>
    <source>
        <strain>C57BL/6J</strain>
    </source>
</reference>
<reference key="4">
    <citation type="journal article" date="2004" name="Genome Res.">
        <title>The status, quality, and expansion of the NIH full-length cDNA project: the Mammalian Gene Collection (MGC).</title>
        <authorList>
            <consortium name="The MGC Project Team"/>
        </authorList>
    </citation>
    <scope>NUCLEOTIDE SEQUENCE [LARGE SCALE MRNA]</scope>
    <source>
        <strain>FVB/N</strain>
        <tissue>Mammary tumor</tissue>
    </source>
</reference>
<reference key="5">
    <citation type="journal article" date="2002" name="Mol. Cell. Biol.">
        <title>Identification and characterization of a tissue-specific coactivator, GT198, that interacts with the DNA-binding domains of nuclear receptors.</title>
        <authorList>
            <person name="Ko L."/>
            <person name="Cardona G.R."/>
            <person name="Henrion-Caude A."/>
            <person name="Chin W.W."/>
        </authorList>
    </citation>
    <scope>TISSUE SPECIFICITY</scope>
    <scope>DEVELOPMENTAL STAGE</scope>
    <scope>SUBCELLULAR LOCATION</scope>
</reference>
<reference key="6">
    <citation type="journal article" date="2003" name="Dev. Cell">
        <title>The Hop2 protein has a direct role in promoting interhomolog interactions during mouse meiosis.</title>
        <authorList>
            <person name="Petukhova G.V."/>
            <person name="Romanienko P.J."/>
            <person name="Camerini-Otero R.D."/>
        </authorList>
    </citation>
    <scope>DISRUPTION PHENOTYPE</scope>
</reference>
<reference key="7">
    <citation type="journal article" date="2004" name="J. Biol. Chem.">
        <title>Positive role of the mammalian TBPIP/HOP2 protein in DMC1-mediated homologous pairing.</title>
        <authorList>
            <person name="Enomoto R."/>
            <person name="Kinebuchi T."/>
            <person name="Sato M."/>
            <person name="Yagi H."/>
            <person name="Shibata T."/>
            <person name="Kurumizaka H."/>
            <person name="Yokoyama S."/>
        </authorList>
    </citation>
    <scope>FUNCTION</scope>
    <scope>DNA-BINDING REGION</scope>
</reference>
<reference key="8">
    <citation type="journal article" date="2006" name="J. Biol. Chem.">
        <title>Molecular activities of meiosis-specific proteins Hop2, Mnd1, and the Hop2-Mnd1 complex.</title>
        <authorList>
            <person name="Pezza R.J."/>
            <person name="Petukhova G.V."/>
            <person name="Ghirlando R."/>
            <person name="Camerini-Otero R.D."/>
        </authorList>
    </citation>
    <scope>FUNCTION</scope>
    <scope>DNA-BINDING REGION</scope>
    <scope>MUTAGENESIS OF GLU-136</scope>
    <scope>INTERACTION WITH MND1</scope>
</reference>
<reference key="9">
    <citation type="journal article" date="2007" name="Genes Dev.">
        <title>Bipartite stimulatory action of the Hop2-Mnd1 complex on the Rad51 recombinase.</title>
        <authorList>
            <person name="Chi P."/>
            <person name="San Filippo J."/>
            <person name="Sehorn M.G."/>
            <person name="Petukhova G.V."/>
            <person name="Sung P."/>
        </authorList>
    </citation>
    <scope>FUNCTION</scope>
</reference>
<reference key="10">
    <citation type="journal article" date="2007" name="Genes Dev.">
        <title>Hop2/Mnd1 acts on two critical steps in Dmc1-promoted homologous pairing.</title>
        <authorList>
            <person name="Pezza R.J."/>
            <person name="Voloshin O.N."/>
            <person name="Vanevski F."/>
            <person name="Camerini-Otero R.D."/>
        </authorList>
    </citation>
    <scope>FUNCTION</scope>
</reference>
<reference key="11">
    <citation type="journal article" date="2007" name="Nucleic Acids Res.">
        <title>Stimulation of fission yeast and mouse Hop2-Mnd1 of the Dmc1 and Rad51 recombinases.</title>
        <authorList>
            <person name="Ploquin M."/>
            <person name="Petukhova G.V."/>
            <person name="Morneau D."/>
            <person name="Dery U."/>
            <person name="Bransi A."/>
            <person name="Stasiak A."/>
            <person name="Camerini-Otero R.D."/>
            <person name="Masson J.-Y."/>
        </authorList>
    </citation>
    <scope>FUNCTION</scope>
</reference>
<reference key="12">
    <citation type="journal article" date="2010" name="Cell">
        <title>A tissue-specific atlas of mouse protein phosphorylation and expression.</title>
        <authorList>
            <person name="Huttlin E.L."/>
            <person name="Jedrychowski M.P."/>
            <person name="Elias J.E."/>
            <person name="Goswami T."/>
            <person name="Rad R."/>
            <person name="Beausoleil S.A."/>
            <person name="Villen J."/>
            <person name="Haas W."/>
            <person name="Sowa M.E."/>
            <person name="Gygi S.P."/>
        </authorList>
    </citation>
    <scope>IDENTIFICATION BY MASS SPECTROMETRY [LARGE SCALE ANALYSIS]</scope>
    <source>
        <tissue>Spleen</tissue>
        <tissue>Testis</tissue>
    </source>
</reference>
<gene>
    <name type="primary">Psmc3ip</name>
    <name type="synonym">Hop2</name>
    <name type="synonym">Tbpip</name>
</gene>
<sequence>MSKSRAEAAAGAPGIILRYLQEQNRPYSAQDVFGNLQKEHGLGKAAVVKALDQLAQEGKIKEKTYGKQKIYFADQNQFDTVSDADLHGLDASIVALTAKVQSLQQSCRHMEAELKELTSALTTPEMQKEIQELKKECAQYTERLKNIKAATNHVTPEEKEKVYRDRQKYCKEWRKRKRMTTELCDAILEGYPKSKKQFFEEVGIETDEDHNVLLPDP</sequence>
<organism>
    <name type="scientific">Mus musculus</name>
    <name type="common">Mouse</name>
    <dbReference type="NCBI Taxonomy" id="10090"/>
    <lineage>
        <taxon>Eukaryota</taxon>
        <taxon>Metazoa</taxon>
        <taxon>Chordata</taxon>
        <taxon>Craniata</taxon>
        <taxon>Vertebrata</taxon>
        <taxon>Euteleostomi</taxon>
        <taxon>Mammalia</taxon>
        <taxon>Eutheria</taxon>
        <taxon>Euarchontoglires</taxon>
        <taxon>Glires</taxon>
        <taxon>Rodentia</taxon>
        <taxon>Myomorpha</taxon>
        <taxon>Muroidea</taxon>
        <taxon>Muridae</taxon>
        <taxon>Murinae</taxon>
        <taxon>Mus</taxon>
        <taxon>Mus</taxon>
    </lineage>
</organism>
<protein>
    <recommendedName>
        <fullName>Homologous-pairing protein 2 homolog</fullName>
    </recommendedName>
    <alternativeName>
        <fullName>PSMC3-interacting protein</fullName>
    </alternativeName>
    <alternativeName>
        <fullName>Proteasome 26S ATPase subunit 3-interacting protein</fullName>
    </alternativeName>
    <alternativeName>
        <fullName>Tat-binding protein 1-interacting protein</fullName>
        <shortName>TBP-1-interacting protein</shortName>
    </alternativeName>
</protein>
<keyword id="KW-0002">3D-structure</keyword>
<keyword id="KW-0175">Coiled coil</keyword>
<keyword id="KW-0233">DNA recombination</keyword>
<keyword id="KW-0238">DNA-binding</keyword>
<keyword id="KW-0469">Meiosis</keyword>
<keyword id="KW-0539">Nucleus</keyword>
<keyword id="KW-1185">Reference proteome</keyword>